<accession>A4SQX0</accession>
<comment type="function">
    <text evidence="1">Catalyzes the deformylation of 4-deoxy-4-formamido-L-arabinose-phosphoundecaprenol to 4-amino-4-deoxy-L-arabinose-phosphoundecaprenol. The modified arabinose is attached to lipid A and is required for resistance to polymyxin and cationic antimicrobial peptides.</text>
</comment>
<comment type="catalytic activity">
    <reaction evidence="1">
        <text>4-deoxy-4-formamido-alpha-L-arabinopyranosyl di-trans,octa-cis-undecaprenyl phosphate + H2O = 4-amino-4-deoxy-alpha-L-arabinopyranosyl di-trans,octa-cis-undecaprenyl phosphate + formate</text>
        <dbReference type="Rhea" id="RHEA:27734"/>
        <dbReference type="ChEBI" id="CHEBI:15377"/>
        <dbReference type="ChEBI" id="CHEBI:15740"/>
        <dbReference type="ChEBI" id="CHEBI:58909"/>
        <dbReference type="ChEBI" id="CHEBI:60463"/>
        <dbReference type="EC" id="3.5.1.n3"/>
    </reaction>
</comment>
<comment type="pathway">
    <text evidence="1">Glycolipid biosynthesis; 4-amino-4-deoxy-alpha-L-arabinose undecaprenyl phosphate biosynthesis; 4-amino-4-deoxy-alpha-L-arabinose undecaprenyl phosphate from UDP-4-deoxy-4-formamido-beta-L-arabinose and undecaprenyl phosphate: step 2/2.</text>
</comment>
<comment type="pathway">
    <text evidence="1">Bacterial outer membrane biogenesis; lipopolysaccharide biosynthesis.</text>
</comment>
<comment type="similarity">
    <text evidence="1">Belongs to the polysaccharide deacetylase family. ArnD deformylase subfamily.</text>
</comment>
<feature type="chain" id="PRO_0000383491" description="Probable 4-deoxy-4-formamido-L-arabinose-phosphoundecaprenol deformylase ArnD">
    <location>
        <begin position="1"/>
        <end position="299"/>
    </location>
</feature>
<feature type="domain" description="NodB homology" evidence="1">
    <location>
        <begin position="2"/>
        <end position="263"/>
    </location>
</feature>
<reference key="1">
    <citation type="journal article" date="2008" name="BMC Genomics">
        <title>The genome of Aeromonas salmonicida subsp. salmonicida A449: insights into the evolution of a fish pathogen.</title>
        <authorList>
            <person name="Reith M.E."/>
            <person name="Singh R.K."/>
            <person name="Curtis B."/>
            <person name="Boyd J.M."/>
            <person name="Bouevitch A."/>
            <person name="Kimball J."/>
            <person name="Munholland J."/>
            <person name="Murphy C."/>
            <person name="Sarty D."/>
            <person name="Williams J."/>
            <person name="Nash J.H."/>
            <person name="Johnson S.C."/>
            <person name="Brown L.L."/>
        </authorList>
    </citation>
    <scope>NUCLEOTIDE SEQUENCE [LARGE SCALE GENOMIC DNA]</scope>
    <source>
        <strain>A449</strain>
    </source>
</reference>
<keyword id="KW-0046">Antibiotic resistance</keyword>
<keyword id="KW-0378">Hydrolase</keyword>
<keyword id="KW-0441">Lipid A biosynthesis</keyword>
<keyword id="KW-0444">Lipid biosynthesis</keyword>
<keyword id="KW-0443">Lipid metabolism</keyword>
<keyword id="KW-0448">Lipopolysaccharide biosynthesis</keyword>
<organism>
    <name type="scientific">Aeromonas salmonicida (strain A449)</name>
    <dbReference type="NCBI Taxonomy" id="382245"/>
    <lineage>
        <taxon>Bacteria</taxon>
        <taxon>Pseudomonadati</taxon>
        <taxon>Pseudomonadota</taxon>
        <taxon>Gammaproteobacteria</taxon>
        <taxon>Aeromonadales</taxon>
        <taxon>Aeromonadaceae</taxon>
        <taxon>Aeromonas</taxon>
    </lineage>
</organism>
<sequence length="299" mass="32993">MIDVGLRIDVDTFRGTRDGVPRLLQTLDRHQIKASFFFSVGPDNMGRHLWRLLKPRFLLKMLRSNAASLYGLDILLAGTAWPGKSIGKQLGSLMRDTDSARHEVGLHAWDHHGWQANTGRWDEATLIHQTRLGVDALNQILRREVDCSAAAGWRADPLTTQAKEAFGFRYNSDCRGSGLFRPLLQDGRPGTPQIPVNLPTFDEVVGTEVTTAQFNAFMLDRLCTPPQVAPHVYTIHAEVEGIVMADQFDALLAEASARGIRFVPLGSLLPPDPAQLDAGRLVRGTLPGREGWLGCKADV</sequence>
<dbReference type="EC" id="3.5.1.n3" evidence="1"/>
<dbReference type="EMBL" id="CP000644">
    <property type="protein sequence ID" value="ABO91292.1"/>
    <property type="molecule type" value="Genomic_DNA"/>
</dbReference>
<dbReference type="RefSeq" id="WP_005311778.1">
    <property type="nucleotide sequence ID" value="NC_009348.1"/>
</dbReference>
<dbReference type="SMR" id="A4SQX0"/>
<dbReference type="STRING" id="29491.GCA_000820065_03697"/>
<dbReference type="KEGG" id="asa:ASA_3310"/>
<dbReference type="eggNOG" id="COG0726">
    <property type="taxonomic scope" value="Bacteria"/>
</dbReference>
<dbReference type="HOGENOM" id="CLU_084199_0_0_6"/>
<dbReference type="UniPathway" id="UPA00030"/>
<dbReference type="UniPathway" id="UPA00036">
    <property type="reaction ID" value="UER00496"/>
</dbReference>
<dbReference type="Proteomes" id="UP000000225">
    <property type="component" value="Chromosome"/>
</dbReference>
<dbReference type="GO" id="GO:0016020">
    <property type="term" value="C:membrane"/>
    <property type="evidence" value="ECO:0007669"/>
    <property type="project" value="GOC"/>
</dbReference>
<dbReference type="GO" id="GO:0016811">
    <property type="term" value="F:hydrolase activity, acting on carbon-nitrogen (but not peptide) bonds, in linear amides"/>
    <property type="evidence" value="ECO:0007669"/>
    <property type="project" value="UniProtKB-UniRule"/>
</dbReference>
<dbReference type="GO" id="GO:0036108">
    <property type="term" value="P:4-amino-4-deoxy-alpha-L-arabinopyranosyl undecaprenyl phosphate biosynthetic process"/>
    <property type="evidence" value="ECO:0007669"/>
    <property type="project" value="UniProtKB-UniRule"/>
</dbReference>
<dbReference type="GO" id="GO:0009245">
    <property type="term" value="P:lipid A biosynthetic process"/>
    <property type="evidence" value="ECO:0007669"/>
    <property type="project" value="UniProtKB-UniRule"/>
</dbReference>
<dbReference type="GO" id="GO:0009103">
    <property type="term" value="P:lipopolysaccharide biosynthetic process"/>
    <property type="evidence" value="ECO:0007669"/>
    <property type="project" value="UniProtKB-UniRule"/>
</dbReference>
<dbReference type="GO" id="GO:0046677">
    <property type="term" value="P:response to antibiotic"/>
    <property type="evidence" value="ECO:0007669"/>
    <property type="project" value="UniProtKB-KW"/>
</dbReference>
<dbReference type="Gene3D" id="3.20.20.370">
    <property type="entry name" value="Glycoside hydrolase/deacetylase"/>
    <property type="match status" value="1"/>
</dbReference>
<dbReference type="HAMAP" id="MF_01870">
    <property type="entry name" value="ArnD"/>
    <property type="match status" value="1"/>
</dbReference>
<dbReference type="InterPro" id="IPR023557">
    <property type="entry name" value="ArnD"/>
</dbReference>
<dbReference type="InterPro" id="IPR011330">
    <property type="entry name" value="Glyco_hydro/deAcase_b/a-brl"/>
</dbReference>
<dbReference type="InterPro" id="IPR002509">
    <property type="entry name" value="NODB_dom"/>
</dbReference>
<dbReference type="NCBIfam" id="NF011923">
    <property type="entry name" value="PRK15394.1"/>
    <property type="match status" value="1"/>
</dbReference>
<dbReference type="Pfam" id="PF01522">
    <property type="entry name" value="Polysacc_deac_1"/>
    <property type="match status" value="1"/>
</dbReference>
<dbReference type="SUPFAM" id="SSF88713">
    <property type="entry name" value="Glycoside hydrolase/deacetylase"/>
    <property type="match status" value="1"/>
</dbReference>
<dbReference type="PROSITE" id="PS51677">
    <property type="entry name" value="NODB"/>
    <property type="match status" value="1"/>
</dbReference>
<evidence type="ECO:0000255" key="1">
    <source>
        <dbReference type="HAMAP-Rule" id="MF_01870"/>
    </source>
</evidence>
<name>ARND_AERS4</name>
<protein>
    <recommendedName>
        <fullName evidence="1">Probable 4-deoxy-4-formamido-L-arabinose-phosphoundecaprenol deformylase ArnD</fullName>
        <ecNumber evidence="1">3.5.1.n3</ecNumber>
    </recommendedName>
</protein>
<proteinExistence type="inferred from homology"/>
<gene>
    <name evidence="1" type="primary">arnD</name>
    <name type="ordered locus">ASA_3310</name>
</gene>